<evidence type="ECO:0000250" key="1"/>
<evidence type="ECO:0000250" key="2">
    <source>
        <dbReference type="UniProtKB" id="O35963"/>
    </source>
</evidence>
<evidence type="ECO:0000269" key="3">
    <source>
    </source>
</evidence>
<evidence type="ECO:0000269" key="4">
    <source>
    </source>
</evidence>
<evidence type="ECO:0000269" key="5">
    <source>
    </source>
</evidence>
<evidence type="ECO:0000269" key="6">
    <source>
    </source>
</evidence>
<evidence type="ECO:0000269" key="7">
    <source>
    </source>
</evidence>
<evidence type="ECO:0000269" key="8">
    <source>
    </source>
</evidence>
<evidence type="ECO:0000269" key="9">
    <source>
    </source>
</evidence>
<evidence type="ECO:0000305" key="10"/>
<evidence type="ECO:0000305" key="11">
    <source>
    </source>
</evidence>
<evidence type="ECO:0000312" key="12">
    <source>
        <dbReference type="HGNC" id="HGNC:16075"/>
    </source>
</evidence>
<evidence type="ECO:0007744" key="13">
    <source>
        <dbReference type="PDB" id="6Y09"/>
    </source>
</evidence>
<evidence type="ECO:0007744" key="14">
    <source>
        <dbReference type="PDB" id="6ZAY"/>
    </source>
</evidence>
<evidence type="ECO:0007829" key="15">
    <source>
        <dbReference type="PDB" id="6Y09"/>
    </source>
</evidence>
<organism>
    <name type="scientific">Homo sapiens</name>
    <name type="common">Human</name>
    <dbReference type="NCBI Taxonomy" id="9606"/>
    <lineage>
        <taxon>Eukaryota</taxon>
        <taxon>Metazoa</taxon>
        <taxon>Chordata</taxon>
        <taxon>Craniata</taxon>
        <taxon>Vertebrata</taxon>
        <taxon>Euteleostomi</taxon>
        <taxon>Mammalia</taxon>
        <taxon>Eutheria</taxon>
        <taxon>Euarchontoglires</taxon>
        <taxon>Primates</taxon>
        <taxon>Haplorrhini</taxon>
        <taxon>Catarrhini</taxon>
        <taxon>Hominidae</taxon>
        <taxon>Homo</taxon>
    </lineage>
</organism>
<feature type="chain" id="PRO_0000121239" description="Ras-related protein Rab-33B">
    <location>
        <begin position="1"/>
        <end position="229"/>
    </location>
</feature>
<feature type="short sequence motif" description="Switch 1" evidence="9 13">
    <location>
        <begin position="56"/>
        <end position="68"/>
    </location>
</feature>
<feature type="short sequence motif" description="Switch 2" evidence="9 13">
    <location>
        <begin position="89"/>
        <end position="108"/>
    </location>
</feature>
<feature type="binding site" evidence="9 13">
    <location>
        <position position="43"/>
    </location>
    <ligand>
        <name>GTP</name>
        <dbReference type="ChEBI" id="CHEBI:37565"/>
    </ligand>
</feature>
<feature type="binding site" evidence="9 13">
    <location>
        <position position="44"/>
    </location>
    <ligand>
        <name>GTP</name>
        <dbReference type="ChEBI" id="CHEBI:37565"/>
    </ligand>
</feature>
<feature type="binding site" evidence="9 13">
    <location>
        <position position="45"/>
    </location>
    <ligand>
        <name>GTP</name>
        <dbReference type="ChEBI" id="CHEBI:37565"/>
    </ligand>
</feature>
<feature type="binding site" evidence="9 13">
    <location>
        <position position="46"/>
    </location>
    <ligand>
        <name>GTP</name>
        <dbReference type="ChEBI" id="CHEBI:37565"/>
    </ligand>
</feature>
<feature type="binding site" evidence="9 13">
    <location>
        <position position="47"/>
    </location>
    <ligand>
        <name>GTP</name>
        <dbReference type="ChEBI" id="CHEBI:37565"/>
    </ligand>
</feature>
<feature type="binding site" evidence="9 13 14">
    <location>
        <position position="47"/>
    </location>
    <ligand>
        <name>Mg(2+)</name>
        <dbReference type="ChEBI" id="CHEBI:18420"/>
    </ligand>
</feature>
<feature type="binding site" evidence="9 13">
    <location>
        <position position="48"/>
    </location>
    <ligand>
        <name>GTP</name>
        <dbReference type="ChEBI" id="CHEBI:37565"/>
    </ligand>
</feature>
<feature type="binding site" evidence="9 13">
    <location>
        <position position="62"/>
    </location>
    <ligand>
        <name>GTP</name>
        <dbReference type="ChEBI" id="CHEBI:37565"/>
    </ligand>
</feature>
<feature type="binding site" evidence="9 13">
    <location>
        <position position="65"/>
    </location>
    <ligand>
        <name>GTP</name>
        <dbReference type="ChEBI" id="CHEBI:37565"/>
    </ligand>
</feature>
<feature type="binding site" evidence="9 13 14">
    <location>
        <position position="65"/>
    </location>
    <ligand>
        <name>Mg(2+)</name>
        <dbReference type="ChEBI" id="CHEBI:18420"/>
    </ligand>
</feature>
<feature type="binding site" evidence="9 13">
    <location>
        <position position="88"/>
    </location>
    <ligand>
        <name>Mg(2+)</name>
        <dbReference type="ChEBI" id="CHEBI:18420"/>
    </ligand>
</feature>
<feature type="binding site" evidence="9 13">
    <location>
        <position position="91"/>
    </location>
    <ligand>
        <name>GTP</name>
        <dbReference type="ChEBI" id="CHEBI:37565"/>
    </ligand>
</feature>
<feature type="binding site" evidence="9 13">
    <location>
        <position position="148"/>
    </location>
    <ligand>
        <name>GTP</name>
        <dbReference type="ChEBI" id="CHEBI:37565"/>
    </ligand>
</feature>
<feature type="binding site" evidence="9 13">
    <location>
        <position position="149"/>
    </location>
    <ligand>
        <name>GTP</name>
        <dbReference type="ChEBI" id="CHEBI:37565"/>
    </ligand>
</feature>
<feature type="binding site" evidence="9 13">
    <location>
        <position position="151"/>
    </location>
    <ligand>
        <name>GTP</name>
        <dbReference type="ChEBI" id="CHEBI:37565"/>
    </ligand>
</feature>
<feature type="binding site" evidence="9 13">
    <location>
        <position position="179"/>
    </location>
    <ligand>
        <name>GTP</name>
        <dbReference type="ChEBI" id="CHEBI:37565"/>
    </ligand>
</feature>
<feature type="binding site" evidence="9 13">
    <location>
        <position position="180"/>
    </location>
    <ligand>
        <name>GTP</name>
        <dbReference type="ChEBI" id="CHEBI:37565"/>
    </ligand>
</feature>
<feature type="modified residue" description="Cysteine methyl ester" evidence="1">
    <location>
        <position position="229"/>
    </location>
</feature>
<feature type="lipid moiety-binding region" description="S-geranylgeranyl cysteine" evidence="1">
    <location>
        <position position="227"/>
    </location>
</feature>
<feature type="lipid moiety-binding region" description="S-geranylgeranyl cysteine" evidence="1">
    <location>
        <position position="229"/>
    </location>
</feature>
<feature type="sequence variant" id="VAR_068854" description="In SMC2; dbSNP:rs587776958." evidence="6">
    <original>K</original>
    <variation>Q</variation>
    <location>
        <position position="46"/>
    </location>
</feature>
<feature type="sequence variant" id="VAR_068855" description="In SMC2; strongly inhibits protein expression and may disrupt the Golgi apparatus structure; dbSNP:rs886044716." evidence="7">
    <original>N</original>
    <variation>K</variation>
    <location>
        <position position="148"/>
    </location>
</feature>
<feature type="mutagenesis site" description="Loss of interaction with ATG16L1. No change in prenylation activity. Loss of interaction with ATG12-ATG5-ATG16L1 complex and colocalization to phagophore; when associated with A-85." evidence="9">
    <original>K</original>
    <variation>A</variation>
    <location>
        <position position="35"/>
    </location>
</feature>
<feature type="mutagenesis site" description="Decreased binding affinity by 273-fold with ATG16L1. No change in prenylation activity. Loss of interaction with ATG16L1 and colocalization to phagophore; when associated with A-95." evidence="9">
    <original>I</original>
    <variation>A</variation>
    <location>
        <position position="66"/>
    </location>
</feature>
<feature type="mutagenesis site" description="Loss of interaction with ATG16L1. No change in prenylation activity. Loss of interaction with ATG12-ATG5-ATG16L1 complex and colocalization to phagophore; when associated with A-35." evidence="9">
    <original>Q</original>
    <variation>A</variation>
    <location>
        <position position="85"/>
    </location>
</feature>
<feature type="mutagenesis site" description="No loss of SGSM2-stimulated GTPase activity." evidence="5">
    <original>Q</original>
    <variation>A</variation>
    <location>
        <position position="92"/>
    </location>
</feature>
<feature type="mutagenesis site" description="Decreased binding affinity by 179-fold with ATG16L1. No change in prenylation activity. Loss of interaction with ATG16L1 and colocalization to phagophore; when associated with A-66." evidence="9">
    <original>F</original>
    <variation>A</variation>
    <location>
        <position position="95"/>
    </location>
</feature>
<feature type="strand" evidence="15">
    <location>
        <begin position="32"/>
        <end position="40"/>
    </location>
</feature>
<feature type="helix" evidence="15">
    <location>
        <begin position="46"/>
        <end position="55"/>
    </location>
</feature>
<feature type="strand" evidence="15">
    <location>
        <begin position="67"/>
        <end position="77"/>
    </location>
</feature>
<feature type="strand" evidence="15">
    <location>
        <begin position="80"/>
        <end position="89"/>
    </location>
</feature>
<feature type="helix" evidence="15">
    <location>
        <begin position="93"/>
        <end position="96"/>
    </location>
</feature>
<feature type="turn" evidence="15">
    <location>
        <begin position="97"/>
        <end position="99"/>
    </location>
</feature>
<feature type="helix" evidence="15">
    <location>
        <begin position="100"/>
        <end position="104"/>
    </location>
</feature>
<feature type="strand" evidence="15">
    <location>
        <begin position="109"/>
        <end position="115"/>
    </location>
</feature>
<feature type="helix" evidence="15">
    <location>
        <begin position="119"/>
        <end position="123"/>
    </location>
</feature>
<feature type="helix" evidence="15">
    <location>
        <begin position="125"/>
        <end position="135"/>
    </location>
</feature>
<feature type="strand" evidence="15">
    <location>
        <begin position="143"/>
        <end position="148"/>
    </location>
</feature>
<feature type="helix" evidence="15">
    <location>
        <begin position="153"/>
        <end position="155"/>
    </location>
</feature>
<feature type="helix" evidence="15">
    <location>
        <begin position="160"/>
        <end position="169"/>
    </location>
</feature>
<feature type="strand" evidence="15">
    <location>
        <begin position="174"/>
        <end position="176"/>
    </location>
</feature>
<feature type="strand" evidence="15">
    <location>
        <begin position="179"/>
        <end position="181"/>
    </location>
</feature>
<feature type="strand" evidence="15">
    <location>
        <begin position="184"/>
        <end position="186"/>
    </location>
</feature>
<feature type="helix" evidence="15">
    <location>
        <begin position="188"/>
        <end position="201"/>
    </location>
</feature>
<gene>
    <name evidence="12" type="primary">RAB33B</name>
</gene>
<protein>
    <recommendedName>
        <fullName>Ras-related protein Rab-33B</fullName>
        <ecNumber evidence="5">3.6.5.2</ecNumber>
    </recommendedName>
</protein>
<reference key="1">
    <citation type="submission" date="2001-02" db="EMBL/GenBank/DDBJ databases">
        <title>Molecular cloning and characterization of human RAB33B.</title>
        <authorList>
            <person name="Mao Y."/>
            <person name="Xie Y."/>
            <person name="Cheng H."/>
        </authorList>
    </citation>
    <scope>NUCLEOTIDE SEQUENCE [MRNA]</scope>
</reference>
<reference key="2">
    <citation type="journal article" date="2001" name="Genome Res.">
        <title>Towards a catalog of human genes and proteins: sequencing and analysis of 500 novel complete protein coding human cDNAs.</title>
        <authorList>
            <person name="Wiemann S."/>
            <person name="Weil B."/>
            <person name="Wellenreuther R."/>
            <person name="Gassenhuber J."/>
            <person name="Glassl S."/>
            <person name="Ansorge W."/>
            <person name="Boecher M."/>
            <person name="Bloecker H."/>
            <person name="Bauersachs S."/>
            <person name="Blum H."/>
            <person name="Lauber J."/>
            <person name="Duesterhoeft A."/>
            <person name="Beyer A."/>
            <person name="Koehrer K."/>
            <person name="Strack N."/>
            <person name="Mewes H.-W."/>
            <person name="Ottenwaelder B."/>
            <person name="Obermaier B."/>
            <person name="Tampe J."/>
            <person name="Heubner D."/>
            <person name="Wambutt R."/>
            <person name="Korn B."/>
            <person name="Klein M."/>
            <person name="Poustka A."/>
        </authorList>
    </citation>
    <scope>NUCLEOTIDE SEQUENCE [LARGE SCALE MRNA]</scope>
    <source>
        <tissue>Testis</tissue>
    </source>
</reference>
<reference key="3">
    <citation type="journal article" date="2004" name="Nat. Genet.">
        <title>Complete sequencing and characterization of 21,243 full-length human cDNAs.</title>
        <authorList>
            <person name="Ota T."/>
            <person name="Suzuki Y."/>
            <person name="Nishikawa T."/>
            <person name="Otsuki T."/>
            <person name="Sugiyama T."/>
            <person name="Irie R."/>
            <person name="Wakamatsu A."/>
            <person name="Hayashi K."/>
            <person name="Sato H."/>
            <person name="Nagai K."/>
            <person name="Kimura K."/>
            <person name="Makita H."/>
            <person name="Sekine M."/>
            <person name="Obayashi M."/>
            <person name="Nishi T."/>
            <person name="Shibahara T."/>
            <person name="Tanaka T."/>
            <person name="Ishii S."/>
            <person name="Yamamoto J."/>
            <person name="Saito K."/>
            <person name="Kawai Y."/>
            <person name="Isono Y."/>
            <person name="Nakamura Y."/>
            <person name="Nagahari K."/>
            <person name="Murakami K."/>
            <person name="Yasuda T."/>
            <person name="Iwayanagi T."/>
            <person name="Wagatsuma M."/>
            <person name="Shiratori A."/>
            <person name="Sudo H."/>
            <person name="Hosoiri T."/>
            <person name="Kaku Y."/>
            <person name="Kodaira H."/>
            <person name="Kondo H."/>
            <person name="Sugawara M."/>
            <person name="Takahashi M."/>
            <person name="Kanda K."/>
            <person name="Yokoi T."/>
            <person name="Furuya T."/>
            <person name="Kikkawa E."/>
            <person name="Omura Y."/>
            <person name="Abe K."/>
            <person name="Kamihara K."/>
            <person name="Katsuta N."/>
            <person name="Sato K."/>
            <person name="Tanikawa M."/>
            <person name="Yamazaki M."/>
            <person name="Ninomiya K."/>
            <person name="Ishibashi T."/>
            <person name="Yamashita H."/>
            <person name="Murakawa K."/>
            <person name="Fujimori K."/>
            <person name="Tanai H."/>
            <person name="Kimata M."/>
            <person name="Watanabe M."/>
            <person name="Hiraoka S."/>
            <person name="Chiba Y."/>
            <person name="Ishida S."/>
            <person name="Ono Y."/>
            <person name="Takiguchi S."/>
            <person name="Watanabe S."/>
            <person name="Yosida M."/>
            <person name="Hotuta T."/>
            <person name="Kusano J."/>
            <person name="Kanehori K."/>
            <person name="Takahashi-Fujii A."/>
            <person name="Hara H."/>
            <person name="Tanase T.-O."/>
            <person name="Nomura Y."/>
            <person name="Togiya S."/>
            <person name="Komai F."/>
            <person name="Hara R."/>
            <person name="Takeuchi K."/>
            <person name="Arita M."/>
            <person name="Imose N."/>
            <person name="Musashino K."/>
            <person name="Yuuki H."/>
            <person name="Oshima A."/>
            <person name="Sasaki N."/>
            <person name="Aotsuka S."/>
            <person name="Yoshikawa Y."/>
            <person name="Matsunawa H."/>
            <person name="Ichihara T."/>
            <person name="Shiohata N."/>
            <person name="Sano S."/>
            <person name="Moriya S."/>
            <person name="Momiyama H."/>
            <person name="Satoh N."/>
            <person name="Takami S."/>
            <person name="Terashima Y."/>
            <person name="Suzuki O."/>
            <person name="Nakagawa S."/>
            <person name="Senoh A."/>
            <person name="Mizoguchi H."/>
            <person name="Goto Y."/>
            <person name="Shimizu F."/>
            <person name="Wakebe H."/>
            <person name="Hishigaki H."/>
            <person name="Watanabe T."/>
            <person name="Sugiyama A."/>
            <person name="Takemoto M."/>
            <person name="Kawakami B."/>
            <person name="Yamazaki M."/>
            <person name="Watanabe K."/>
            <person name="Kumagai A."/>
            <person name="Itakura S."/>
            <person name="Fukuzumi Y."/>
            <person name="Fujimori Y."/>
            <person name="Komiyama M."/>
            <person name="Tashiro H."/>
            <person name="Tanigami A."/>
            <person name="Fujiwara T."/>
            <person name="Ono T."/>
            <person name="Yamada K."/>
            <person name="Fujii Y."/>
            <person name="Ozaki K."/>
            <person name="Hirao M."/>
            <person name="Ohmori Y."/>
            <person name="Kawabata A."/>
            <person name="Hikiji T."/>
            <person name="Kobatake N."/>
            <person name="Inagaki H."/>
            <person name="Ikema Y."/>
            <person name="Okamoto S."/>
            <person name="Okitani R."/>
            <person name="Kawakami T."/>
            <person name="Noguchi S."/>
            <person name="Itoh T."/>
            <person name="Shigeta K."/>
            <person name="Senba T."/>
            <person name="Matsumura K."/>
            <person name="Nakajima Y."/>
            <person name="Mizuno T."/>
            <person name="Morinaga M."/>
            <person name="Sasaki M."/>
            <person name="Togashi T."/>
            <person name="Oyama M."/>
            <person name="Hata H."/>
            <person name="Watanabe M."/>
            <person name="Komatsu T."/>
            <person name="Mizushima-Sugano J."/>
            <person name="Satoh T."/>
            <person name="Shirai Y."/>
            <person name="Takahashi Y."/>
            <person name="Nakagawa K."/>
            <person name="Okumura K."/>
            <person name="Nagase T."/>
            <person name="Nomura N."/>
            <person name="Kikuchi H."/>
            <person name="Masuho Y."/>
            <person name="Yamashita R."/>
            <person name="Nakai K."/>
            <person name="Yada T."/>
            <person name="Nakamura Y."/>
            <person name="Ohara O."/>
            <person name="Isogai T."/>
            <person name="Sugano S."/>
        </authorList>
    </citation>
    <scope>NUCLEOTIDE SEQUENCE [LARGE SCALE MRNA]</scope>
    <source>
        <tissue>Tongue</tissue>
    </source>
</reference>
<reference key="4">
    <citation type="journal article" date="2005" name="Nature">
        <title>Generation and annotation of the DNA sequences of human chromosomes 2 and 4.</title>
        <authorList>
            <person name="Hillier L.W."/>
            <person name="Graves T.A."/>
            <person name="Fulton R.S."/>
            <person name="Fulton L.A."/>
            <person name="Pepin K.H."/>
            <person name="Minx P."/>
            <person name="Wagner-McPherson C."/>
            <person name="Layman D."/>
            <person name="Wylie K."/>
            <person name="Sekhon M."/>
            <person name="Becker M.C."/>
            <person name="Fewell G.A."/>
            <person name="Delehaunty K.D."/>
            <person name="Miner T.L."/>
            <person name="Nash W.E."/>
            <person name="Kremitzki C."/>
            <person name="Oddy L."/>
            <person name="Du H."/>
            <person name="Sun H."/>
            <person name="Bradshaw-Cordum H."/>
            <person name="Ali J."/>
            <person name="Carter J."/>
            <person name="Cordes M."/>
            <person name="Harris A."/>
            <person name="Isak A."/>
            <person name="van Brunt A."/>
            <person name="Nguyen C."/>
            <person name="Du F."/>
            <person name="Courtney L."/>
            <person name="Kalicki J."/>
            <person name="Ozersky P."/>
            <person name="Abbott S."/>
            <person name="Armstrong J."/>
            <person name="Belter E.A."/>
            <person name="Caruso L."/>
            <person name="Cedroni M."/>
            <person name="Cotton M."/>
            <person name="Davidson T."/>
            <person name="Desai A."/>
            <person name="Elliott G."/>
            <person name="Erb T."/>
            <person name="Fronick C."/>
            <person name="Gaige T."/>
            <person name="Haakenson W."/>
            <person name="Haglund K."/>
            <person name="Holmes A."/>
            <person name="Harkins R."/>
            <person name="Kim K."/>
            <person name="Kruchowski S.S."/>
            <person name="Strong C.M."/>
            <person name="Grewal N."/>
            <person name="Goyea E."/>
            <person name="Hou S."/>
            <person name="Levy A."/>
            <person name="Martinka S."/>
            <person name="Mead K."/>
            <person name="McLellan M.D."/>
            <person name="Meyer R."/>
            <person name="Randall-Maher J."/>
            <person name="Tomlinson C."/>
            <person name="Dauphin-Kohlberg S."/>
            <person name="Kozlowicz-Reilly A."/>
            <person name="Shah N."/>
            <person name="Swearengen-Shahid S."/>
            <person name="Snider J."/>
            <person name="Strong J.T."/>
            <person name="Thompson J."/>
            <person name="Yoakum M."/>
            <person name="Leonard S."/>
            <person name="Pearman C."/>
            <person name="Trani L."/>
            <person name="Radionenko M."/>
            <person name="Waligorski J.E."/>
            <person name="Wang C."/>
            <person name="Rock S.M."/>
            <person name="Tin-Wollam A.-M."/>
            <person name="Maupin R."/>
            <person name="Latreille P."/>
            <person name="Wendl M.C."/>
            <person name="Yang S.-P."/>
            <person name="Pohl C."/>
            <person name="Wallis J.W."/>
            <person name="Spieth J."/>
            <person name="Bieri T.A."/>
            <person name="Berkowicz N."/>
            <person name="Nelson J.O."/>
            <person name="Osborne J."/>
            <person name="Ding L."/>
            <person name="Meyer R."/>
            <person name="Sabo A."/>
            <person name="Shotland Y."/>
            <person name="Sinha P."/>
            <person name="Wohldmann P.E."/>
            <person name="Cook L.L."/>
            <person name="Hickenbotham M.T."/>
            <person name="Eldred J."/>
            <person name="Williams D."/>
            <person name="Jones T.A."/>
            <person name="She X."/>
            <person name="Ciccarelli F.D."/>
            <person name="Izaurralde E."/>
            <person name="Taylor J."/>
            <person name="Schmutz J."/>
            <person name="Myers R.M."/>
            <person name="Cox D.R."/>
            <person name="Huang X."/>
            <person name="McPherson J.D."/>
            <person name="Mardis E.R."/>
            <person name="Clifton S.W."/>
            <person name="Warren W.C."/>
            <person name="Chinwalla A.T."/>
            <person name="Eddy S.R."/>
            <person name="Marra M.A."/>
            <person name="Ovcharenko I."/>
            <person name="Furey T.S."/>
            <person name="Miller W."/>
            <person name="Eichler E.E."/>
            <person name="Bork P."/>
            <person name="Suyama M."/>
            <person name="Torrents D."/>
            <person name="Waterston R.H."/>
            <person name="Wilson R.K."/>
        </authorList>
    </citation>
    <scope>NUCLEOTIDE SEQUENCE [LARGE SCALE GENOMIC DNA]</scope>
</reference>
<reference key="5">
    <citation type="journal article" date="2004" name="Genome Res.">
        <title>The status, quality, and expansion of the NIH full-length cDNA project: the Mammalian Gene Collection (MGC).</title>
        <authorList>
            <consortium name="The MGC Project Team"/>
        </authorList>
    </citation>
    <scope>NUCLEOTIDE SEQUENCE [LARGE SCALE MRNA]</scope>
    <source>
        <tissue>Brain</tissue>
    </source>
</reference>
<reference key="6">
    <citation type="journal article" date="2008" name="Mol. Biol. Cell">
        <title>Golgi-resident small GTPase Rab33B interacts with Atg16L and modulates autophagosome formation.</title>
        <authorList>
            <person name="Itoh T."/>
            <person name="Fujita N."/>
            <person name="Kanno E."/>
            <person name="Yamamoto A."/>
            <person name="Yoshimori T."/>
            <person name="Fukuda M."/>
        </authorList>
    </citation>
    <scope>FUNCTION</scope>
    <scope>SUBCELLULAR LOCATION</scope>
</reference>
<reference key="7">
    <citation type="journal article" date="2010" name="Traffic">
        <title>Rab33b and Rab6 are functionally overlapping regulators of Golgi homeostasis and trafficking.</title>
        <authorList>
            <person name="Starr T."/>
            <person name="Sun Y."/>
            <person name="Wilkins N."/>
            <person name="Storrie B."/>
        </authorList>
    </citation>
    <scope>FUNCTION</scope>
</reference>
<reference key="8">
    <citation type="journal article" date="2011" name="BMC Syst. Biol.">
        <title>Initial characterization of the human central proteome.</title>
        <authorList>
            <person name="Burkard T.R."/>
            <person name="Planyavsky M."/>
            <person name="Kaupe I."/>
            <person name="Breitwieser F.P."/>
            <person name="Buerckstuemmer T."/>
            <person name="Bennett K.L."/>
            <person name="Superti-Furga G."/>
            <person name="Colinge J."/>
        </authorList>
    </citation>
    <scope>IDENTIFICATION BY MASS SPECTROMETRY [LARGE SCALE ANALYSIS]</scope>
</reference>
<reference key="9">
    <citation type="journal article" date="2011" name="J. Biol. Chem.">
        <title>RUTBC1 protein, a Rab9A effector that activates GTP hydrolysis by Rab32 and Rab33B proteins.</title>
        <authorList>
            <person name="Nottingham R.M."/>
            <person name="Ganley I.G."/>
            <person name="Barr F.A."/>
            <person name="Lambright D.G."/>
            <person name="Pfeffer S.R."/>
        </authorList>
    </citation>
    <scope>FUNCTION</scope>
    <scope>CATALYTIC ACTIVITY</scope>
    <scope>INTERACTION WITH ATG16L1</scope>
    <scope>ACTIVITY REGULATION</scope>
    <scope>MUTAGENESIS OF GLN-92</scope>
</reference>
<reference key="10">
    <citation type="journal article" date="2012" name="J. Biol. Chem.">
        <title>Ric1-Rgp1 complex is a guanine nucleotide exchange factor for the late Golgi Rab6A GTPase and an effector of the medial Golgi Rab33B GTPase.</title>
        <authorList>
            <person name="Pusapati G.V."/>
            <person name="Luchetti G."/>
            <person name="Pfeffer S.R."/>
        </authorList>
    </citation>
    <scope>INTERACTION WITH RGP1 AND RIC1</scope>
</reference>
<reference evidence="13 14" key="11">
    <citation type="journal article" date="2021" name="Autophagy">
        <title>RAB33B recruits the ATG16L1 complex to the phagophore via a noncanonical RAB binding protein.</title>
        <authorList>
            <person name="Pantoom S."/>
            <person name="Konstantinidis G."/>
            <person name="Voss S."/>
            <person name="Han H."/>
            <person name="Hofnagel O."/>
            <person name="Li Z."/>
            <person name="Wu Y.W."/>
        </authorList>
    </citation>
    <scope>X-RAY CRYSTALLOGRAPHY (2.40 ANGSTROMS) OF 30-218 IN COMPLEX WITH GTP AND MG(2+)</scope>
    <scope>COFACTOR</scope>
    <scope>FUNCTION</scope>
    <scope>INTERACTION WITH ATG16L1; ATG5 AND ATG12</scope>
    <scope>DOMAIN</scope>
    <scope>SUBCELLULAR LOCATION</scope>
    <scope>MUTAGENESIS OF LYS-35; ILE-66; GLN-85 AND PHE-95</scope>
    <scope>PRENYLATION</scope>
</reference>
<reference key="12">
    <citation type="journal article" date="2012" name="J. Med. Genet.">
        <title>Mutation in RAB33B, which encodes a regulator of retrograde Golgi transport, defines a second Dyggve--Melchior--Clausen locus.</title>
        <authorList>
            <person name="Alshammari M.J."/>
            <person name="Al-Otaibi L."/>
            <person name="Alkuraya F.S."/>
        </authorList>
    </citation>
    <scope>VARIANT SMC2 GLN-46</scope>
</reference>
<reference key="13">
    <citation type="journal article" date="2013" name="Hum. Mutat.">
        <title>A novel RAB33B mutation in Smith-McCort dysplasia.</title>
        <authorList>
            <person name="Dupuis N."/>
            <person name="Lebon S."/>
            <person name="Kumar M."/>
            <person name="Drunat S."/>
            <person name="Graul-Neumann L.M."/>
            <person name="Gressens P."/>
            <person name="El Ghouzzi V."/>
        </authorList>
    </citation>
    <scope>VARIANT SMC2 LYS-148</scope>
    <scope>CHARACTERIZATION OF VARIANT SMC2 LYS-148</scope>
</reference>
<accession>Q9H082</accession>
<accession>B2R987</accession>
<accession>Q4W5B0</accession>
<name>RB33B_HUMAN</name>
<sequence length="229" mass="25718">MAEEMESSLEASFSSSGAVSGASGFLPPARSRIFKIIVIGDSNVGKTCLTYRFCAGRFPDRTEATIGVDFRERAVEIDGERIKIQLWDTAGQERFRKSMVQHYYRNVHAVVFVYDMTNMASFHSLPSWIEECKQHLLANDIPRILVGNKCDLRSAIQVPTDLAQKFADTHSMPLFETSAKNPNDNDHVEAIFMTLAHKLKSHKPLMLSQPPDNGIILKPEPKPAMTCWC</sequence>
<proteinExistence type="evidence at protein level"/>
<dbReference type="EC" id="3.6.5.2" evidence="5"/>
<dbReference type="EMBL" id="AF350420">
    <property type="protein sequence ID" value="AAL83916.1"/>
    <property type="molecule type" value="mRNA"/>
</dbReference>
<dbReference type="EMBL" id="AL136904">
    <property type="protein sequence ID" value="CAB66838.1"/>
    <property type="molecule type" value="mRNA"/>
</dbReference>
<dbReference type="EMBL" id="AK313685">
    <property type="protein sequence ID" value="BAG36434.1"/>
    <property type="molecule type" value="mRNA"/>
</dbReference>
<dbReference type="EMBL" id="AC114743">
    <property type="protein sequence ID" value="AAY40936.1"/>
    <property type="molecule type" value="Genomic_DNA"/>
</dbReference>
<dbReference type="EMBL" id="BC111977">
    <property type="protein sequence ID" value="AAI11978.1"/>
    <property type="molecule type" value="mRNA"/>
</dbReference>
<dbReference type="CCDS" id="CCDS3747.1"/>
<dbReference type="RefSeq" id="NP_112586.1">
    <property type="nucleotide sequence ID" value="NM_031296.3"/>
</dbReference>
<dbReference type="PDB" id="6Y09">
    <property type="method" value="X-ray"/>
    <property type="resolution" value="2.40 A"/>
    <property type="chains" value="A/B=30-218"/>
</dbReference>
<dbReference type="PDB" id="6ZAY">
    <property type="method" value="X-ray"/>
    <property type="resolution" value="2.40 A"/>
    <property type="chains" value="A/B=30-218"/>
</dbReference>
<dbReference type="PDBsum" id="6Y09"/>
<dbReference type="PDBsum" id="6ZAY"/>
<dbReference type="SMR" id="Q9H082"/>
<dbReference type="BioGRID" id="123654">
    <property type="interactions" value="41"/>
</dbReference>
<dbReference type="DIP" id="DIP-61978N"/>
<dbReference type="FunCoup" id="Q9H082">
    <property type="interactions" value="2140"/>
</dbReference>
<dbReference type="IntAct" id="Q9H082">
    <property type="interactions" value="24"/>
</dbReference>
<dbReference type="MINT" id="Q9H082"/>
<dbReference type="STRING" id="9606.ENSP00000306496"/>
<dbReference type="GlyCosmos" id="Q9H082">
    <property type="glycosylation" value="1 site, 1 glycan"/>
</dbReference>
<dbReference type="GlyGen" id="Q9H082">
    <property type="glycosylation" value="1 site, 1 O-linked glycan (1 site)"/>
</dbReference>
<dbReference type="iPTMnet" id="Q9H082"/>
<dbReference type="PhosphoSitePlus" id="Q9H082"/>
<dbReference type="BioMuta" id="RAB33B"/>
<dbReference type="DMDM" id="14916662"/>
<dbReference type="jPOST" id="Q9H082"/>
<dbReference type="MassIVE" id="Q9H082"/>
<dbReference type="PaxDb" id="9606-ENSP00000306496"/>
<dbReference type="PeptideAtlas" id="Q9H082"/>
<dbReference type="ProteomicsDB" id="80216"/>
<dbReference type="Pumba" id="Q9H082"/>
<dbReference type="Antibodypedia" id="27146">
    <property type="antibodies" value="76 antibodies from 23 providers"/>
</dbReference>
<dbReference type="DNASU" id="83452"/>
<dbReference type="Ensembl" id="ENST00000305626.6">
    <property type="protein sequence ID" value="ENSP00000306496.5"/>
    <property type="gene ID" value="ENSG00000172007.7"/>
</dbReference>
<dbReference type="GeneID" id="83452"/>
<dbReference type="KEGG" id="hsa:83452"/>
<dbReference type="MANE-Select" id="ENST00000305626.6">
    <property type="protein sequence ID" value="ENSP00000306496.5"/>
    <property type="RefSeq nucleotide sequence ID" value="NM_031296.3"/>
    <property type="RefSeq protein sequence ID" value="NP_112586.1"/>
</dbReference>
<dbReference type="UCSC" id="uc003ihv.4">
    <property type="organism name" value="human"/>
</dbReference>
<dbReference type="AGR" id="HGNC:16075"/>
<dbReference type="CTD" id="83452"/>
<dbReference type="DisGeNET" id="83452"/>
<dbReference type="GeneCards" id="RAB33B"/>
<dbReference type="HGNC" id="HGNC:16075">
    <property type="gene designation" value="RAB33B"/>
</dbReference>
<dbReference type="HPA" id="ENSG00000172007">
    <property type="expression patterns" value="Low tissue specificity"/>
</dbReference>
<dbReference type="MalaCards" id="RAB33B"/>
<dbReference type="MIM" id="605950">
    <property type="type" value="gene"/>
</dbReference>
<dbReference type="MIM" id="615222">
    <property type="type" value="phenotype"/>
</dbReference>
<dbReference type="neXtProt" id="NX_Q9H082"/>
<dbReference type="OpenTargets" id="ENSG00000172007"/>
<dbReference type="Orphanet" id="178355">
    <property type="disease" value="Smith-McCort dysplasia"/>
</dbReference>
<dbReference type="PharmGKB" id="PA34125"/>
<dbReference type="VEuPathDB" id="HostDB:ENSG00000172007"/>
<dbReference type="eggNOG" id="KOG0084">
    <property type="taxonomic scope" value="Eukaryota"/>
</dbReference>
<dbReference type="GeneTree" id="ENSGT00940000157090"/>
<dbReference type="HOGENOM" id="CLU_041217_10_3_1"/>
<dbReference type="InParanoid" id="Q9H082"/>
<dbReference type="OrthoDB" id="10006973at2759"/>
<dbReference type="PAN-GO" id="Q9H082">
    <property type="GO annotations" value="5 GO annotations based on evolutionary models"/>
</dbReference>
<dbReference type="PhylomeDB" id="Q9H082"/>
<dbReference type="TreeFam" id="TF300097"/>
<dbReference type="PathwayCommons" id="Q9H082"/>
<dbReference type="Reactome" id="R-HSA-6811438">
    <property type="pathway name" value="Intra-Golgi traffic"/>
</dbReference>
<dbReference type="Reactome" id="R-HSA-8854214">
    <property type="pathway name" value="TBC/RABGAPs"/>
</dbReference>
<dbReference type="Reactome" id="R-HSA-8873719">
    <property type="pathway name" value="RAB geranylgeranylation"/>
</dbReference>
<dbReference type="SignaLink" id="Q9H082"/>
<dbReference type="SIGNOR" id="Q9H082"/>
<dbReference type="BioGRID-ORCS" id="83452">
    <property type="hits" value="14 hits in 1157 CRISPR screens"/>
</dbReference>
<dbReference type="ChiTaRS" id="RAB33B">
    <property type="organism name" value="human"/>
</dbReference>
<dbReference type="GeneWiki" id="RAB33B"/>
<dbReference type="GenomeRNAi" id="83452"/>
<dbReference type="Pharos" id="Q9H082">
    <property type="development level" value="Tbio"/>
</dbReference>
<dbReference type="PRO" id="PR:Q9H082"/>
<dbReference type="Proteomes" id="UP000005640">
    <property type="component" value="Chromosome 4"/>
</dbReference>
<dbReference type="RNAct" id="Q9H082">
    <property type="molecule type" value="protein"/>
</dbReference>
<dbReference type="Bgee" id="ENSG00000172007">
    <property type="expression patterns" value="Expressed in calcaneal tendon and 203 other cell types or tissues"/>
</dbReference>
<dbReference type="ExpressionAtlas" id="Q9H082">
    <property type="expression patterns" value="baseline and differential"/>
</dbReference>
<dbReference type="GO" id="GO:0005768">
    <property type="term" value="C:endosome"/>
    <property type="evidence" value="ECO:0000318"/>
    <property type="project" value="GO_Central"/>
</dbReference>
<dbReference type="GO" id="GO:0005794">
    <property type="term" value="C:Golgi apparatus"/>
    <property type="evidence" value="ECO:0000314"/>
    <property type="project" value="UniProtKB"/>
</dbReference>
<dbReference type="GO" id="GO:0005796">
    <property type="term" value="C:Golgi lumen"/>
    <property type="evidence" value="ECO:0000314"/>
    <property type="project" value="UniProtKB"/>
</dbReference>
<dbReference type="GO" id="GO:0000139">
    <property type="term" value="C:Golgi membrane"/>
    <property type="evidence" value="ECO:0000314"/>
    <property type="project" value="UniProtKB"/>
</dbReference>
<dbReference type="GO" id="GO:0034045">
    <property type="term" value="C:phagophore assembly site membrane"/>
    <property type="evidence" value="ECO:0000314"/>
    <property type="project" value="UniProtKB"/>
</dbReference>
<dbReference type="GO" id="GO:0098793">
    <property type="term" value="C:presynapse"/>
    <property type="evidence" value="ECO:0007669"/>
    <property type="project" value="Ensembl"/>
</dbReference>
<dbReference type="GO" id="GO:0003925">
    <property type="term" value="F:G protein activity"/>
    <property type="evidence" value="ECO:0000315"/>
    <property type="project" value="UniProtKB"/>
</dbReference>
<dbReference type="GO" id="GO:0005525">
    <property type="term" value="F:GTP binding"/>
    <property type="evidence" value="ECO:0000318"/>
    <property type="project" value="GO_Central"/>
</dbReference>
<dbReference type="GO" id="GO:0003924">
    <property type="term" value="F:GTPase activity"/>
    <property type="evidence" value="ECO:0000315"/>
    <property type="project" value="UniProtKB"/>
</dbReference>
<dbReference type="GO" id="GO:0000045">
    <property type="term" value="P:autophagosome assembly"/>
    <property type="evidence" value="ECO:0000318"/>
    <property type="project" value="GO_Central"/>
</dbReference>
<dbReference type="GO" id="GO:0006891">
    <property type="term" value="P:intra-Golgi vesicle-mediated transport"/>
    <property type="evidence" value="ECO:0000315"/>
    <property type="project" value="UniProtKB"/>
</dbReference>
<dbReference type="GO" id="GO:1903434">
    <property type="term" value="P:negative regulation of constitutive secretory pathway"/>
    <property type="evidence" value="ECO:0000315"/>
    <property type="project" value="UniProtKB"/>
</dbReference>
<dbReference type="GO" id="GO:0034067">
    <property type="term" value="P:protein localization to Golgi apparatus"/>
    <property type="evidence" value="ECO:0000315"/>
    <property type="project" value="UniProtKB"/>
</dbReference>
<dbReference type="GO" id="GO:0034497">
    <property type="term" value="P:protein localization to phagophore assembly site"/>
    <property type="evidence" value="ECO:0000315"/>
    <property type="project" value="UniProtKB"/>
</dbReference>
<dbReference type="GO" id="GO:0015031">
    <property type="term" value="P:protein transport"/>
    <property type="evidence" value="ECO:0007669"/>
    <property type="project" value="UniProtKB-KW"/>
</dbReference>
<dbReference type="GO" id="GO:0032482">
    <property type="term" value="P:Rab protein signal transduction"/>
    <property type="evidence" value="ECO:0007669"/>
    <property type="project" value="InterPro"/>
</dbReference>
<dbReference type="GO" id="GO:0017157">
    <property type="term" value="P:regulation of exocytosis"/>
    <property type="evidence" value="ECO:0000318"/>
    <property type="project" value="GO_Central"/>
</dbReference>
<dbReference type="GO" id="GO:1903358">
    <property type="term" value="P:regulation of Golgi organization"/>
    <property type="evidence" value="ECO:0000315"/>
    <property type="project" value="UniProtKB"/>
</dbReference>
<dbReference type="GO" id="GO:2000156">
    <property type="term" value="P:regulation of retrograde vesicle-mediated transport, Golgi to ER"/>
    <property type="evidence" value="ECO:0000315"/>
    <property type="project" value="UniProtKB"/>
</dbReference>
<dbReference type="GO" id="GO:0048705">
    <property type="term" value="P:skeletal system morphogenesis"/>
    <property type="evidence" value="ECO:0000315"/>
    <property type="project" value="UniProtKB"/>
</dbReference>
<dbReference type="CDD" id="cd04115">
    <property type="entry name" value="Rab33B_Rab33A"/>
    <property type="match status" value="1"/>
</dbReference>
<dbReference type="FunFam" id="3.40.50.300:FF:000516">
    <property type="entry name" value="RAB33B, member RAS oncogene family"/>
    <property type="match status" value="1"/>
</dbReference>
<dbReference type="Gene3D" id="3.40.50.300">
    <property type="entry name" value="P-loop containing nucleotide triphosphate hydrolases"/>
    <property type="match status" value="1"/>
</dbReference>
<dbReference type="InterPro" id="IPR027417">
    <property type="entry name" value="P-loop_NTPase"/>
</dbReference>
<dbReference type="InterPro" id="IPR041822">
    <property type="entry name" value="Rab33A/B"/>
</dbReference>
<dbReference type="InterPro" id="IPR005225">
    <property type="entry name" value="Small_GTP-bd"/>
</dbReference>
<dbReference type="InterPro" id="IPR001806">
    <property type="entry name" value="Small_GTPase"/>
</dbReference>
<dbReference type="NCBIfam" id="TIGR00231">
    <property type="entry name" value="small_GTP"/>
    <property type="match status" value="1"/>
</dbReference>
<dbReference type="PANTHER" id="PTHR47978">
    <property type="match status" value="1"/>
</dbReference>
<dbReference type="Pfam" id="PF00071">
    <property type="entry name" value="Ras"/>
    <property type="match status" value="1"/>
</dbReference>
<dbReference type="PRINTS" id="PR00449">
    <property type="entry name" value="RASTRNSFRMNG"/>
</dbReference>
<dbReference type="SMART" id="SM00175">
    <property type="entry name" value="RAB"/>
    <property type="match status" value="1"/>
</dbReference>
<dbReference type="SMART" id="SM00176">
    <property type="entry name" value="RAN"/>
    <property type="match status" value="1"/>
</dbReference>
<dbReference type="SMART" id="SM00173">
    <property type="entry name" value="RAS"/>
    <property type="match status" value="1"/>
</dbReference>
<dbReference type="SMART" id="SM00174">
    <property type="entry name" value="RHO"/>
    <property type="match status" value="1"/>
</dbReference>
<dbReference type="SUPFAM" id="SSF52540">
    <property type="entry name" value="P-loop containing nucleoside triphosphate hydrolases"/>
    <property type="match status" value="1"/>
</dbReference>
<dbReference type="PROSITE" id="PS51419">
    <property type="entry name" value="RAB"/>
    <property type="match status" value="1"/>
</dbReference>
<keyword id="KW-0002">3D-structure</keyword>
<keyword id="KW-0072">Autophagy</keyword>
<keyword id="KW-0225">Disease variant</keyword>
<keyword id="KW-0242">Dwarfism</keyword>
<keyword id="KW-0333">Golgi apparatus</keyword>
<keyword id="KW-0342">GTP-binding</keyword>
<keyword id="KW-0378">Hydrolase</keyword>
<keyword id="KW-0449">Lipoprotein</keyword>
<keyword id="KW-0472">Membrane</keyword>
<keyword id="KW-0488">Methylation</keyword>
<keyword id="KW-0547">Nucleotide-binding</keyword>
<keyword id="KW-0636">Prenylation</keyword>
<keyword id="KW-0653">Protein transport</keyword>
<keyword id="KW-1267">Proteomics identification</keyword>
<keyword id="KW-1185">Reference proteome</keyword>
<keyword id="KW-0813">Transport</keyword>
<comment type="function">
    <text evidence="3 4 5 9">The small GTPases Rab are key regulators of intracellular membrane trafficking, from the formation of transport vesicles to their fusion with membranes (PubMed:20163571, PubMed:21808068). Rabs cycle between an inactive GDP-bound form and an active GTP-bound form that is able to recruit to membranes different sets of downstream effectors directly responsible for vesicle formation, movement, tethering and fusion (PubMed:18448665, PubMed:20163571, PubMed:21808068). RAB33B acts, in coordination with RAB6A, to regulate intra-Golgi retrograde trafficking (PubMed:20163571). Participates in autophagosome formation by recruiting the ATG12-ATG5-ATG16L1 complex to phagophores, probably in a nucleotide-independent manner (PubMed:18448665, PubMed:32960676).</text>
</comment>
<comment type="catalytic activity">
    <reaction evidence="5">
        <text>GTP + H2O = GDP + phosphate + H(+)</text>
        <dbReference type="Rhea" id="RHEA:19669"/>
        <dbReference type="ChEBI" id="CHEBI:15377"/>
        <dbReference type="ChEBI" id="CHEBI:15378"/>
        <dbReference type="ChEBI" id="CHEBI:37565"/>
        <dbReference type="ChEBI" id="CHEBI:43474"/>
        <dbReference type="ChEBI" id="CHEBI:58189"/>
        <dbReference type="EC" id="3.6.5.2"/>
    </reaction>
    <physiologicalReaction direction="left-to-right" evidence="11">
        <dbReference type="Rhea" id="RHEA:19670"/>
    </physiologicalReaction>
</comment>
<comment type="cofactor">
    <cofactor evidence="9">
        <name>Mg(2+)</name>
        <dbReference type="ChEBI" id="CHEBI:18420"/>
    </cofactor>
</comment>
<comment type="activity regulation">
    <text evidence="5 10">Regulated by guanine nucleotide exchange factors (GEFs) which promote the exchange of bound GDP for free GTP (Probable). Regulated by GTPase activating proteins (GAPs) such as SGSM2 which increase the GTP hydrolysis activity (PubMed:21808068). Inhibited by GDP dissociation inhibitors (GDIs) (Probable).</text>
</comment>
<comment type="subunit">
    <text evidence="2 5 8 9">Interacts (GTP- and GDP-bound forms) with ATG16L1; the complex consists of a tetramer where two RAB33B molecules bind independently one molecule of the ATG16L1 homodimer; the interaction promotes ATG12-ATG5-ATG16L1 complex recruitment to phagophores (PubMed:18448665, PubMed:21808068, PubMed:32960676). Interacts with ATG16L2; however interaction is approximately hundred times lower than for ATG16L1 (By similarity). Interacts with RIC1 (via C-terminus domain); the interaction is direct with a preference for RAB33B-GTP (PubMed:23091056). Interacts with RGP1 (PubMed:23091056).</text>
</comment>
<comment type="interaction">
    <interactant intactId="EBI-3048549">
        <id>Q9H082</id>
    </interactant>
    <interactant intactId="EBI-535909">
        <id>Q676U5</id>
        <label>ATG16L1</label>
    </interactant>
    <organismsDiffer>false</organismsDiffer>
    <experiments>5</experiments>
</comment>
<comment type="interaction">
    <interactant intactId="EBI-3048549">
        <id>Q9H082</id>
    </interactant>
    <interactant intactId="EBI-19117969">
        <id>Q8WXA3-4</id>
        <label>RUFY2</label>
    </interactant>
    <organismsDiffer>false</organismsDiffer>
    <experiments>3</experiments>
</comment>
<comment type="interaction">
    <interactant intactId="EBI-3048549">
        <id>Q9H082</id>
    </interactant>
    <interactant intactId="EBI-11522811">
        <id>Q8IUQ4-2</id>
        <label>SIAH1</label>
    </interactant>
    <organismsDiffer>false</organismsDiffer>
    <experiments>3</experiments>
</comment>
<comment type="subcellular location">
    <subcellularLocation>
        <location evidence="9">Golgi apparatus membrane</location>
        <topology evidence="10">Lipid-anchor</topology>
    </subcellularLocation>
    <subcellularLocation>
        <location evidence="3">Golgi apparatus</location>
        <location evidence="3">cis-Golgi network</location>
    </subcellularLocation>
    <subcellularLocation>
        <location evidence="9">Preautophagosomal structure membrane</location>
    </subcellularLocation>
    <text evidence="2 9">Under starvation conditions punctate RAB33B-positive structures are often observed in the cytoplasm (By similarity). Under starved conditions RAB33B translocates from the Golgi to phagophores; this translocation is driven by interaction with ATG16L1 (PubMed:32960676).</text>
</comment>
<comment type="domain">
    <text evidence="9">Switch 1, switch 2 and the interswitch regions are characteristic of Rab GTPases and mediate the interactions with Rab downstream effectors. The switch regions undergo conformational changes upon nucleotide binding which drive interaction with specific sets of effector proteins. Although most effectors only bind GTP-bound Rab, ATG16L1 effector binds both GTP- and GDP-bound RAB33B.</text>
</comment>
<comment type="PTM">
    <text evidence="9">Prenylated.</text>
</comment>
<comment type="disease" evidence="6 7">
    <disease id="DI-03716">
        <name>Smith-McCort dysplasia 2</name>
        <acronym>SMC2</acronym>
        <description>A rare autosomal recessive osteochondrodysplasia with skeletal features identical to those of Dyggve-Melchior-Clausen syndrome, but with normal intelligence and no microcephaly. It is characterized by short limbs and trunk with barrel-shaped chest. The radiographic phenotype includes platyspondyly, generalized abnormalities of the epiphyses and metaphyses, and a distinctive lacy appearance of the iliac crest.</description>
        <dbReference type="MIM" id="615222"/>
    </disease>
    <text>The disease is caused by variants affecting the gene represented in this entry.</text>
</comment>
<comment type="similarity">
    <text evidence="10">Belongs to the small GTPase superfamily. Rab family.</text>
</comment>